<organism>
    <name type="scientific">Arabidopsis thaliana</name>
    <name type="common">Mouse-ear cress</name>
    <dbReference type="NCBI Taxonomy" id="3702"/>
    <lineage>
        <taxon>Eukaryota</taxon>
        <taxon>Viridiplantae</taxon>
        <taxon>Streptophyta</taxon>
        <taxon>Embryophyta</taxon>
        <taxon>Tracheophyta</taxon>
        <taxon>Spermatophyta</taxon>
        <taxon>Magnoliopsida</taxon>
        <taxon>eudicotyledons</taxon>
        <taxon>Gunneridae</taxon>
        <taxon>Pentapetalae</taxon>
        <taxon>rosids</taxon>
        <taxon>malvids</taxon>
        <taxon>Brassicales</taxon>
        <taxon>Brassicaceae</taxon>
        <taxon>Camelineae</taxon>
        <taxon>Arabidopsis</taxon>
    </lineage>
</organism>
<keyword id="KW-0430">Lectin</keyword>
<keyword id="KW-1185">Reference proteome</keyword>
<keyword id="KW-0677">Repeat</keyword>
<evidence type="ECO:0000255" key="1">
    <source>
        <dbReference type="PROSITE-ProRule" id="PRU01088"/>
    </source>
</evidence>
<evidence type="ECO:0000305" key="2"/>
<dbReference type="EMBL" id="AB025612">
    <property type="protein sequence ID" value="BAA98153.1"/>
    <property type="molecule type" value="Genomic_DNA"/>
</dbReference>
<dbReference type="EMBL" id="CP002688">
    <property type="protein sequence ID" value="AED95865.1"/>
    <property type="molecule type" value="Genomic_DNA"/>
</dbReference>
<dbReference type="RefSeq" id="NP_199797.1">
    <property type="nucleotide sequence ID" value="NM_124364.1"/>
</dbReference>
<dbReference type="SMR" id="Q9LTA7"/>
<dbReference type="FunCoup" id="Q9LTA7">
    <property type="interactions" value="6"/>
</dbReference>
<dbReference type="PaxDb" id="3702-AT5G49860.1"/>
<dbReference type="EnsemblPlants" id="AT5G49860.1">
    <property type="protein sequence ID" value="AT5G49860.1"/>
    <property type="gene ID" value="AT5G49860"/>
</dbReference>
<dbReference type="GeneID" id="835049"/>
<dbReference type="Gramene" id="AT5G49860.1">
    <property type="protein sequence ID" value="AT5G49860.1"/>
    <property type="gene ID" value="AT5G49860"/>
</dbReference>
<dbReference type="KEGG" id="ath:AT5G49860"/>
<dbReference type="Araport" id="AT5G49860"/>
<dbReference type="TAIR" id="AT5G49860"/>
<dbReference type="eggNOG" id="ENOG502SCUZ">
    <property type="taxonomic scope" value="Eukaryota"/>
</dbReference>
<dbReference type="HOGENOM" id="CLU_019384_1_1_1"/>
<dbReference type="InParanoid" id="Q9LTA7"/>
<dbReference type="OMA" id="DYWDDGN"/>
<dbReference type="OrthoDB" id="581739at2759"/>
<dbReference type="PhylomeDB" id="Q9LTA7"/>
<dbReference type="PRO" id="PR:Q9LTA7"/>
<dbReference type="Proteomes" id="UP000006548">
    <property type="component" value="Chromosome 5"/>
</dbReference>
<dbReference type="ExpressionAtlas" id="Q9LTA7">
    <property type="expression patterns" value="baseline and differential"/>
</dbReference>
<dbReference type="GO" id="GO:0030246">
    <property type="term" value="F:carbohydrate binding"/>
    <property type="evidence" value="ECO:0007669"/>
    <property type="project" value="UniProtKB-KW"/>
</dbReference>
<dbReference type="CDD" id="cd09612">
    <property type="entry name" value="Jacalin"/>
    <property type="match status" value="1"/>
</dbReference>
<dbReference type="FunFam" id="2.100.10.30:FF:000001">
    <property type="entry name" value="Jacalin-related lectin 33"/>
    <property type="match status" value="1"/>
</dbReference>
<dbReference type="Gene3D" id="2.100.10.30">
    <property type="entry name" value="Jacalin-like lectin domain"/>
    <property type="match status" value="2"/>
</dbReference>
<dbReference type="InterPro" id="IPR001229">
    <property type="entry name" value="Jacalin-like_lectin_dom"/>
</dbReference>
<dbReference type="InterPro" id="IPR033734">
    <property type="entry name" value="Jacalin-like_lectin_dom_plant"/>
</dbReference>
<dbReference type="InterPro" id="IPR036404">
    <property type="entry name" value="Jacalin-like_lectin_dom_sf"/>
</dbReference>
<dbReference type="PANTHER" id="PTHR47293:SF58">
    <property type="entry name" value="JACALIN-RELATED LECTIN 22-RELATED"/>
    <property type="match status" value="1"/>
</dbReference>
<dbReference type="PANTHER" id="PTHR47293">
    <property type="entry name" value="JACALIN-RELATED LECTIN 3"/>
    <property type="match status" value="1"/>
</dbReference>
<dbReference type="Pfam" id="PF01419">
    <property type="entry name" value="Jacalin"/>
    <property type="match status" value="2"/>
</dbReference>
<dbReference type="SMART" id="SM00915">
    <property type="entry name" value="Jacalin"/>
    <property type="match status" value="1"/>
</dbReference>
<dbReference type="SUPFAM" id="SSF51101">
    <property type="entry name" value="Mannose-binding lectins"/>
    <property type="match status" value="2"/>
</dbReference>
<dbReference type="PROSITE" id="PS51752">
    <property type="entry name" value="JACALIN_LECTIN"/>
    <property type="match status" value="2"/>
</dbReference>
<name>JAL47_ARATH</name>
<proteinExistence type="inferred from homology"/>
<comment type="similarity">
    <text evidence="1 2">Belongs to the jacalin lectin family.</text>
</comment>
<sequence>MDSNVITSLTFKTSKGRTSPKFGYGTSDSVEFVLESKGCAIVGFYGWYKTGSGYTTALGAYYYPMPLPPSSEKLEAQGGAGGAPWDDGSNFEGVRKIYIGTGEIGIVSIKFLYENDIHEIIVGDHHGNKNLLRHEEFDLDYPSEYLTSVEGSYDVVPGSEEDEVMIMLKFTTNMRTSPCYGLDDDPSFVLHKEGHKIVGFHGKSSTMLHKLGIHVLPITHS</sequence>
<reference key="1">
    <citation type="submission" date="1999-04" db="EMBL/GenBank/DDBJ databases">
        <title>Structural analysis of Arabidopsis thaliana chromosome 5. XI.</title>
        <authorList>
            <person name="Kaneko T."/>
            <person name="Katoh T."/>
            <person name="Asamizu E."/>
            <person name="Sato S."/>
            <person name="Nakamura Y."/>
            <person name="Kotani H."/>
            <person name="Tabata S."/>
        </authorList>
    </citation>
    <scope>NUCLEOTIDE SEQUENCE [LARGE SCALE GENOMIC DNA]</scope>
</reference>
<reference key="2">
    <citation type="journal article" date="2017" name="Plant J.">
        <title>Araport11: a complete reannotation of the Arabidopsis thaliana reference genome.</title>
        <authorList>
            <person name="Cheng C.Y."/>
            <person name="Krishnakumar V."/>
            <person name="Chan A.P."/>
            <person name="Thibaud-Nissen F."/>
            <person name="Schobel S."/>
            <person name="Town C.D."/>
        </authorList>
    </citation>
    <scope>GENOME REANNOTATION</scope>
    <source>
        <strain>cv. Columbia</strain>
    </source>
</reference>
<reference key="3">
    <citation type="journal article" date="2008" name="Plant Cell Physiol.">
        <title>Antagonistic jacalin-related lectins regulate the size of ER body-type beta-glucosidase complexes in Arabidopsis thaliana.</title>
        <authorList>
            <person name="Nagano A.J."/>
            <person name="Fukao Y."/>
            <person name="Fujiwara M."/>
            <person name="Nishimura M."/>
            <person name="Hara-Nishimura I."/>
        </authorList>
    </citation>
    <scope>GENE FAMILY</scope>
    <scope>NOMENCLATURE</scope>
</reference>
<gene>
    <name type="primary">JAL47</name>
    <name type="ordered locus">At5g49860</name>
    <name type="ORF">K21G20.7</name>
</gene>
<feature type="chain" id="PRO_0000430404" description="Jacalin-related lectin 47">
    <location>
        <begin position="1"/>
        <end position="221"/>
    </location>
</feature>
<feature type="domain" description="Jacalin-type lectin 1" evidence="1">
    <location>
        <begin position="1"/>
        <end position="64"/>
    </location>
</feature>
<feature type="domain" description="Jacalin-type lectin 2" evidence="1">
    <location>
        <begin position="71"/>
        <end position="217"/>
    </location>
</feature>
<accession>Q9LTA7</accession>
<protein>
    <recommendedName>
        <fullName>Jacalin-related lectin 47</fullName>
    </recommendedName>
</protein>